<comment type="function">
    <text evidence="1">May help in the organization of the PsaL subunit.</text>
</comment>
<comment type="subcellular location">
    <subcellularLocation>
        <location evidence="1">Plastid</location>
        <location evidence="1">Chloroplast thylakoid membrane</location>
        <topology evidence="1">Single-pass membrane protein</topology>
    </subcellularLocation>
</comment>
<comment type="similarity">
    <text evidence="1">Belongs to the PsaI family.</text>
</comment>
<dbReference type="EMBL" id="AP009123">
    <property type="protein sequence ID" value="BAF41257.1"/>
    <property type="molecule type" value="Genomic_DNA"/>
</dbReference>
<dbReference type="RefSeq" id="YP_913197.1">
    <property type="nucleotide sequence ID" value="NC_008641.1"/>
</dbReference>
<dbReference type="SMR" id="A0ZZ45"/>
<dbReference type="GeneID" id="4575214"/>
<dbReference type="GO" id="GO:0009535">
    <property type="term" value="C:chloroplast thylakoid membrane"/>
    <property type="evidence" value="ECO:0007669"/>
    <property type="project" value="UniProtKB-SubCell"/>
</dbReference>
<dbReference type="GO" id="GO:0009522">
    <property type="term" value="C:photosystem I"/>
    <property type="evidence" value="ECO:0007669"/>
    <property type="project" value="UniProtKB-KW"/>
</dbReference>
<dbReference type="GO" id="GO:0015979">
    <property type="term" value="P:photosynthesis"/>
    <property type="evidence" value="ECO:0007669"/>
    <property type="project" value="UniProtKB-UniRule"/>
</dbReference>
<dbReference type="HAMAP" id="MF_00431">
    <property type="entry name" value="PSI_PsaI"/>
    <property type="match status" value="1"/>
</dbReference>
<dbReference type="InterPro" id="IPR001302">
    <property type="entry name" value="PSI_PsaI"/>
</dbReference>
<dbReference type="InterPro" id="IPR036357">
    <property type="entry name" value="PSI_PsaI_sf"/>
</dbReference>
<dbReference type="NCBIfam" id="TIGR03052">
    <property type="entry name" value="PS_I_psaI"/>
    <property type="match status" value="1"/>
</dbReference>
<dbReference type="PANTHER" id="PTHR35775">
    <property type="match status" value="1"/>
</dbReference>
<dbReference type="PANTHER" id="PTHR35775:SF2">
    <property type="entry name" value="PHOTOSYSTEM I REACTION CENTER SUBUNIT VIII"/>
    <property type="match status" value="1"/>
</dbReference>
<dbReference type="Pfam" id="PF00796">
    <property type="entry name" value="PSI_8"/>
    <property type="match status" value="1"/>
</dbReference>
<dbReference type="SUPFAM" id="SSF81540">
    <property type="entry name" value="Subunit VIII of photosystem I reaction centre, PsaI"/>
    <property type="match status" value="1"/>
</dbReference>
<organism>
    <name type="scientific">Gossypium barbadense</name>
    <name type="common">Sea Island cotton</name>
    <name type="synonym">Hibiscus barbadensis</name>
    <dbReference type="NCBI Taxonomy" id="3634"/>
    <lineage>
        <taxon>Eukaryota</taxon>
        <taxon>Viridiplantae</taxon>
        <taxon>Streptophyta</taxon>
        <taxon>Embryophyta</taxon>
        <taxon>Tracheophyta</taxon>
        <taxon>Spermatophyta</taxon>
        <taxon>Magnoliopsida</taxon>
        <taxon>eudicotyledons</taxon>
        <taxon>Gunneridae</taxon>
        <taxon>Pentapetalae</taxon>
        <taxon>rosids</taxon>
        <taxon>malvids</taxon>
        <taxon>Malvales</taxon>
        <taxon>Malvaceae</taxon>
        <taxon>Malvoideae</taxon>
        <taxon>Gossypium</taxon>
    </lineage>
</organism>
<reference key="1">
    <citation type="journal article" date="2006" name="Genes Genet. Syst.">
        <title>Complete nucleotide sequence of the cotton (Gossypium barbadense L.) chloroplast genome with a comparative analysis of sequences among 9 dicot plants.</title>
        <authorList>
            <person name="Ibrahim R.I.H."/>
            <person name="Azuma J."/>
            <person name="Sakamoto M."/>
        </authorList>
    </citation>
    <scope>NUCLEOTIDE SEQUENCE [LARGE SCALE GENOMIC DNA]</scope>
</reference>
<proteinExistence type="inferred from homology"/>
<feature type="chain" id="PRO_0000276021" description="Photosystem I reaction center subunit VIII">
    <location>
        <begin position="1"/>
        <end position="37"/>
    </location>
</feature>
<feature type="transmembrane region" description="Helical" evidence="1">
    <location>
        <begin position="10"/>
        <end position="30"/>
    </location>
</feature>
<protein>
    <recommendedName>
        <fullName evidence="1">Photosystem I reaction center subunit VIII</fullName>
        <shortName evidence="1">PSI-I</shortName>
    </recommendedName>
</protein>
<gene>
    <name evidence="1" type="primary">psaI</name>
</gene>
<geneLocation type="chloroplast"/>
<evidence type="ECO:0000255" key="1">
    <source>
        <dbReference type="HAMAP-Rule" id="MF_00431"/>
    </source>
</evidence>
<accession>A0ZZ45</accession>
<sequence>MTTISSFPSIFVPLVGLVFPAIAMASLSLYVQKTKIF</sequence>
<keyword id="KW-0150">Chloroplast</keyword>
<keyword id="KW-0472">Membrane</keyword>
<keyword id="KW-0602">Photosynthesis</keyword>
<keyword id="KW-0603">Photosystem I</keyword>
<keyword id="KW-0934">Plastid</keyword>
<keyword id="KW-0793">Thylakoid</keyword>
<keyword id="KW-0812">Transmembrane</keyword>
<keyword id="KW-1133">Transmembrane helix</keyword>
<name>PSAI_GOSBA</name>